<feature type="chain" id="PRO_0000258895" description="UPF0301 protein YPA_0329">
    <location>
        <begin position="1"/>
        <end position="187"/>
    </location>
</feature>
<comment type="similarity">
    <text evidence="1">Belongs to the UPF0301 (AlgH) family.</text>
</comment>
<reference key="1">
    <citation type="journal article" date="2006" name="J. Bacteriol.">
        <title>Complete genome sequence of Yersinia pestis strains Antiqua and Nepal516: evidence of gene reduction in an emerging pathogen.</title>
        <authorList>
            <person name="Chain P.S.G."/>
            <person name="Hu P."/>
            <person name="Malfatti S.A."/>
            <person name="Radnedge L."/>
            <person name="Larimer F."/>
            <person name="Vergez L.M."/>
            <person name="Worsham P."/>
            <person name="Chu M.C."/>
            <person name="Andersen G.L."/>
        </authorList>
    </citation>
    <scope>NUCLEOTIDE SEQUENCE [LARGE SCALE GENOMIC DNA]</scope>
    <source>
        <strain>Antiqua</strain>
    </source>
</reference>
<sequence length="187" mass="20609">MNLQHHFLIAMPSLQDPQFKRSVIYICEHGEKGAMGLVINKPLEQLTVETILEKLKIKSPSRDPAIRLDNVVLAGGPLAEDRGFILHSPQEGFASSIHISPETMITTSKDVLETLGTSGQPKNLLVALGYASWRQGQLEQELLDNVWLTTEADTHILFNTPIAERWQAAANKLGINIFNIAPQAGHA</sequence>
<name>Y329_YERPA</name>
<protein>
    <recommendedName>
        <fullName evidence="1">UPF0301 protein YPA_0329</fullName>
    </recommendedName>
</protein>
<proteinExistence type="inferred from homology"/>
<evidence type="ECO:0000255" key="1">
    <source>
        <dbReference type="HAMAP-Rule" id="MF_00758"/>
    </source>
</evidence>
<gene>
    <name type="ordered locus">YPA_0329</name>
</gene>
<accession>Q1CB75</accession>
<organism>
    <name type="scientific">Yersinia pestis bv. Antiqua (strain Antiqua)</name>
    <dbReference type="NCBI Taxonomy" id="360102"/>
    <lineage>
        <taxon>Bacteria</taxon>
        <taxon>Pseudomonadati</taxon>
        <taxon>Pseudomonadota</taxon>
        <taxon>Gammaproteobacteria</taxon>
        <taxon>Enterobacterales</taxon>
        <taxon>Yersiniaceae</taxon>
        <taxon>Yersinia</taxon>
    </lineage>
</organism>
<dbReference type="EMBL" id="CP000308">
    <property type="protein sequence ID" value="ABG12297.1"/>
    <property type="molecule type" value="Genomic_DNA"/>
</dbReference>
<dbReference type="RefSeq" id="WP_002209977.1">
    <property type="nucleotide sequence ID" value="NZ_CP009906.1"/>
</dbReference>
<dbReference type="SMR" id="Q1CB75"/>
<dbReference type="KEGG" id="ypa:YPA_0329"/>
<dbReference type="Proteomes" id="UP000001971">
    <property type="component" value="Chromosome"/>
</dbReference>
<dbReference type="GO" id="GO:0005829">
    <property type="term" value="C:cytosol"/>
    <property type="evidence" value="ECO:0007669"/>
    <property type="project" value="TreeGrafter"/>
</dbReference>
<dbReference type="Gene3D" id="3.40.1740.10">
    <property type="entry name" value="VC0467-like"/>
    <property type="match status" value="1"/>
</dbReference>
<dbReference type="Gene3D" id="3.30.70.1300">
    <property type="entry name" value="VC0467-like domains"/>
    <property type="match status" value="1"/>
</dbReference>
<dbReference type="HAMAP" id="MF_00758">
    <property type="entry name" value="UPF0301"/>
    <property type="match status" value="1"/>
</dbReference>
<dbReference type="InterPro" id="IPR003774">
    <property type="entry name" value="AlgH-like"/>
</dbReference>
<dbReference type="NCBIfam" id="NF001266">
    <property type="entry name" value="PRK00228.1-1"/>
    <property type="match status" value="1"/>
</dbReference>
<dbReference type="PANTHER" id="PTHR30327">
    <property type="entry name" value="UNCHARACTERIZED PROTEIN YQGE"/>
    <property type="match status" value="1"/>
</dbReference>
<dbReference type="PANTHER" id="PTHR30327:SF1">
    <property type="entry name" value="UPF0301 PROTEIN YQGE"/>
    <property type="match status" value="1"/>
</dbReference>
<dbReference type="Pfam" id="PF02622">
    <property type="entry name" value="DUF179"/>
    <property type="match status" value="1"/>
</dbReference>
<dbReference type="SUPFAM" id="SSF143456">
    <property type="entry name" value="VC0467-like"/>
    <property type="match status" value="1"/>
</dbReference>